<keyword id="KW-1185">Reference proteome</keyword>
<organism>
    <name type="scientific">Proteus mirabilis (strain HI4320)</name>
    <dbReference type="NCBI Taxonomy" id="529507"/>
    <lineage>
        <taxon>Bacteria</taxon>
        <taxon>Pseudomonadati</taxon>
        <taxon>Pseudomonadota</taxon>
        <taxon>Gammaproteobacteria</taxon>
        <taxon>Enterobacterales</taxon>
        <taxon>Morganellaceae</taxon>
        <taxon>Proteus</taxon>
    </lineage>
</organism>
<dbReference type="EMBL" id="AM942759">
    <property type="protein sequence ID" value="CAR42676.1"/>
    <property type="molecule type" value="Genomic_DNA"/>
</dbReference>
<dbReference type="RefSeq" id="WP_004251194.1">
    <property type="nucleotide sequence ID" value="NC_010554.1"/>
</dbReference>
<dbReference type="EnsemblBacteria" id="CAR42676">
    <property type="protein sequence ID" value="CAR42676"/>
    <property type="gene ID" value="PMI1258"/>
</dbReference>
<dbReference type="GeneID" id="6803344"/>
<dbReference type="KEGG" id="pmr:PMI1258"/>
<dbReference type="eggNOG" id="COG1671">
    <property type="taxonomic scope" value="Bacteria"/>
</dbReference>
<dbReference type="HOGENOM" id="CLU_106619_1_0_6"/>
<dbReference type="Proteomes" id="UP000008319">
    <property type="component" value="Chromosome"/>
</dbReference>
<dbReference type="CDD" id="cd18720">
    <property type="entry name" value="PIN_YqxD-like"/>
    <property type="match status" value="1"/>
</dbReference>
<dbReference type="HAMAP" id="MF_00489">
    <property type="entry name" value="UPF0178"/>
    <property type="match status" value="1"/>
</dbReference>
<dbReference type="InterPro" id="IPR003791">
    <property type="entry name" value="UPF0178"/>
</dbReference>
<dbReference type="NCBIfam" id="NF001095">
    <property type="entry name" value="PRK00124.1"/>
    <property type="match status" value="1"/>
</dbReference>
<dbReference type="PANTHER" id="PTHR35146">
    <property type="entry name" value="UPF0178 PROTEIN YAII"/>
    <property type="match status" value="1"/>
</dbReference>
<dbReference type="PANTHER" id="PTHR35146:SF1">
    <property type="entry name" value="UPF0178 PROTEIN YAII"/>
    <property type="match status" value="1"/>
</dbReference>
<dbReference type="Pfam" id="PF02639">
    <property type="entry name" value="DUF188"/>
    <property type="match status" value="1"/>
</dbReference>
<gene>
    <name type="ordered locus">PMI1258</name>
</gene>
<name>Y1258_PROMH</name>
<protein>
    <recommendedName>
        <fullName evidence="1">UPF0178 protein PMI1258</fullName>
    </recommendedName>
</protein>
<accession>B4F2U6</accession>
<comment type="similarity">
    <text evidence="1">Belongs to the UPF0178 family.</text>
</comment>
<proteinExistence type="inferred from homology"/>
<reference key="1">
    <citation type="journal article" date="2008" name="J. Bacteriol.">
        <title>Complete genome sequence of uropathogenic Proteus mirabilis, a master of both adherence and motility.</title>
        <authorList>
            <person name="Pearson M.M."/>
            <person name="Sebaihia M."/>
            <person name="Churcher C."/>
            <person name="Quail M.A."/>
            <person name="Seshasayee A.S."/>
            <person name="Luscombe N.M."/>
            <person name="Abdellah Z."/>
            <person name="Arrosmith C."/>
            <person name="Atkin B."/>
            <person name="Chillingworth T."/>
            <person name="Hauser H."/>
            <person name="Jagels K."/>
            <person name="Moule S."/>
            <person name="Mungall K."/>
            <person name="Norbertczak H."/>
            <person name="Rabbinowitsch E."/>
            <person name="Walker D."/>
            <person name="Whithead S."/>
            <person name="Thomson N.R."/>
            <person name="Rather P.N."/>
            <person name="Parkhill J."/>
            <person name="Mobley H.L.T."/>
        </authorList>
    </citation>
    <scope>NUCLEOTIDE SEQUENCE [LARGE SCALE GENOMIC DNA]</scope>
    <source>
        <strain>HI4320</strain>
    </source>
</reference>
<feature type="chain" id="PRO_1000126202" description="UPF0178 protein PMI1258">
    <location>
        <begin position="1"/>
        <end position="151"/>
    </location>
</feature>
<sequence length="151" mass="17040">MPIWVDADACPKVIKEILYRAADREKVVITFVANQRLSIPASPYLRTLQVSAGFDVADNEIVQRANQDDLVITADIPLAAEVIEKGAIALNPRGERYTESTIRERLNIRDFMDTMRASGIQTGGPASLSQRDRQLFANELDKWLLQQKRKK</sequence>
<evidence type="ECO:0000255" key="1">
    <source>
        <dbReference type="HAMAP-Rule" id="MF_00489"/>
    </source>
</evidence>